<comment type="function">
    <text evidence="1">Probable tubulin polyglutamylase that generates side chains of glutamate on the gamma-carboxyl group of specific glutamate residues within the C-terminal tail of target proteins. Similar to TTLL1, may acquire enzymatic activity only in complex with other proteins as it is most likely lacking domains important for autonomous activity. Mediates tubulin polyglutamylation which induces establishment of microtubule heterogeneity in sperm flagella, thereby playing a role in normal motile flagella axoneme structure and sperm flagella beating pattern.</text>
</comment>
<comment type="catalytic activity">
    <reaction evidence="1">
        <text>(L-glutamyl)(n)-gamma-L-glutamyl-L-glutamyl-[protein] + L-glutamate + ATP = (L-glutamyl)(n+1)-gamma-L-glutamyl-L-glutamyl-[protein] + ADP + phosphate + H(+)</text>
        <dbReference type="Rhea" id="RHEA:60148"/>
        <dbReference type="Rhea" id="RHEA-COMP:15519"/>
        <dbReference type="Rhea" id="RHEA-COMP:15675"/>
        <dbReference type="ChEBI" id="CHEBI:15378"/>
        <dbReference type="ChEBI" id="CHEBI:29985"/>
        <dbReference type="ChEBI" id="CHEBI:30616"/>
        <dbReference type="ChEBI" id="CHEBI:43474"/>
        <dbReference type="ChEBI" id="CHEBI:143623"/>
        <dbReference type="ChEBI" id="CHEBI:456216"/>
    </reaction>
    <physiologicalReaction direction="left-to-right" evidence="1">
        <dbReference type="Rhea" id="RHEA:60149"/>
    </physiologicalReaction>
</comment>
<comment type="cofactor">
    <cofactor evidence="2">
        <name>Mg(2+)</name>
        <dbReference type="ChEBI" id="CHEBI:18420"/>
    </cofactor>
</comment>
<comment type="subcellular location">
    <subcellularLocation>
        <location evidence="1">Cytoplasm</location>
        <location evidence="1">Cytoskeleton</location>
        <location evidence="1">Cilium basal body</location>
    </subcellularLocation>
    <subcellularLocation>
        <location evidence="1">Cytoplasm</location>
        <location evidence="1">Cytoskeleton</location>
    </subcellularLocation>
    <subcellularLocation>
        <location evidence="1">Cytoplasm</location>
        <location evidence="1">Cytoskeleton</location>
        <location evidence="1">Flagellum axoneme</location>
    </subcellularLocation>
</comment>
<comment type="domain">
    <text evidence="2">Gln-155 is the main determinant for regioselectivity, which segregates between initiases and elongases in all tubulin--tyrosine ligase family. A glutamine residue at this position is found in elongases TTLL6, TTLL9, TTLL11, TTLL13, TTLL10 and favors glutamate-chain elongation, whereas an arginine residue is found in initiases TTLL2, TTLL4, TTLL5, TTLL3, TTLL8 and favors initiation.</text>
</comment>
<comment type="similarity">
    <text evidence="5">Belongs to the tubulin--tyrosine ligase family.</text>
</comment>
<evidence type="ECO:0000250" key="1">
    <source>
        <dbReference type="UniProtKB" id="A2APC3"/>
    </source>
</evidence>
<evidence type="ECO:0000250" key="2">
    <source>
        <dbReference type="UniProtKB" id="A4Q9E8"/>
    </source>
</evidence>
<evidence type="ECO:0000255" key="3">
    <source>
        <dbReference type="PROSITE-ProRule" id="PRU00568"/>
    </source>
</evidence>
<evidence type="ECO:0000256" key="4">
    <source>
        <dbReference type="SAM" id="MobiDB-lite"/>
    </source>
</evidence>
<evidence type="ECO:0000305" key="5"/>
<name>TTLL9_BOVIN</name>
<keyword id="KW-0067">ATP-binding</keyword>
<keyword id="KW-0966">Cell projection</keyword>
<keyword id="KW-0969">Cilium</keyword>
<keyword id="KW-0963">Cytoplasm</keyword>
<keyword id="KW-0206">Cytoskeleton</keyword>
<keyword id="KW-0282">Flagellum</keyword>
<keyword id="KW-0436">Ligase</keyword>
<keyword id="KW-0460">Magnesium</keyword>
<keyword id="KW-0479">Metal-binding</keyword>
<keyword id="KW-0493">Microtubule</keyword>
<keyword id="KW-0547">Nucleotide-binding</keyword>
<keyword id="KW-1185">Reference proteome</keyword>
<dbReference type="EC" id="6.3.2.-" evidence="1"/>
<dbReference type="EMBL" id="BC102853">
    <property type="protein sequence ID" value="AAI02854.1"/>
    <property type="molecule type" value="mRNA"/>
</dbReference>
<dbReference type="RefSeq" id="NP_001030455.1">
    <property type="nucleotide sequence ID" value="NM_001035378.2"/>
</dbReference>
<dbReference type="SMR" id="Q3SZH6"/>
<dbReference type="FunCoup" id="Q3SZH6">
    <property type="interactions" value="226"/>
</dbReference>
<dbReference type="STRING" id="9913.ENSBTAP00000058899"/>
<dbReference type="PaxDb" id="9913-ENSBTAP00000012842"/>
<dbReference type="Ensembl" id="ENSBTAT00000082103.1">
    <property type="protein sequence ID" value="ENSBTAP00000058899.1"/>
    <property type="gene ID" value="ENSBTAG00000005937.7"/>
</dbReference>
<dbReference type="GeneID" id="529246"/>
<dbReference type="KEGG" id="bta:529246"/>
<dbReference type="CTD" id="164395"/>
<dbReference type="VEuPathDB" id="HostDB:ENSBTAG00000005937"/>
<dbReference type="VGNC" id="VGNC:36496">
    <property type="gene designation" value="TTLL9"/>
</dbReference>
<dbReference type="eggNOG" id="KOG2157">
    <property type="taxonomic scope" value="Eukaryota"/>
</dbReference>
<dbReference type="GeneTree" id="ENSGT00940000159879"/>
<dbReference type="HOGENOM" id="CLU_010131_0_1_1"/>
<dbReference type="InParanoid" id="Q3SZH6"/>
<dbReference type="OMA" id="NDITMHL"/>
<dbReference type="OrthoDB" id="277439at2759"/>
<dbReference type="Reactome" id="R-BTA-8955332">
    <property type="pathway name" value="Carboxyterminal post-translational modifications of tubulin"/>
</dbReference>
<dbReference type="Proteomes" id="UP000009136">
    <property type="component" value="Chromosome 13"/>
</dbReference>
<dbReference type="Bgee" id="ENSBTAG00000005937">
    <property type="expression patterns" value="Expressed in semen and 79 other cell types or tissues"/>
</dbReference>
<dbReference type="GO" id="GO:0036064">
    <property type="term" value="C:ciliary basal body"/>
    <property type="evidence" value="ECO:0000318"/>
    <property type="project" value="GO_Central"/>
</dbReference>
<dbReference type="GO" id="GO:0005737">
    <property type="term" value="C:cytoplasm"/>
    <property type="evidence" value="ECO:0007669"/>
    <property type="project" value="UniProtKB-KW"/>
</dbReference>
<dbReference type="GO" id="GO:0005874">
    <property type="term" value="C:microtubule"/>
    <property type="evidence" value="ECO:0007669"/>
    <property type="project" value="UniProtKB-KW"/>
</dbReference>
<dbReference type="GO" id="GO:0031514">
    <property type="term" value="C:motile cilium"/>
    <property type="evidence" value="ECO:0007669"/>
    <property type="project" value="UniProtKB-KW"/>
</dbReference>
<dbReference type="GO" id="GO:0005524">
    <property type="term" value="F:ATP binding"/>
    <property type="evidence" value="ECO:0007669"/>
    <property type="project" value="UniProtKB-KW"/>
</dbReference>
<dbReference type="GO" id="GO:0046872">
    <property type="term" value="F:metal ion binding"/>
    <property type="evidence" value="ECO:0007669"/>
    <property type="project" value="UniProtKB-KW"/>
</dbReference>
<dbReference type="GO" id="GO:0106438">
    <property type="term" value="F:protein-glutamic acid ligase activity, elongating"/>
    <property type="evidence" value="ECO:0007669"/>
    <property type="project" value="RHEA"/>
</dbReference>
<dbReference type="GO" id="GO:0015631">
    <property type="term" value="F:tubulin binding"/>
    <property type="evidence" value="ECO:0000318"/>
    <property type="project" value="GO_Central"/>
</dbReference>
<dbReference type="GO" id="GO:0070740">
    <property type="term" value="F:tubulin-glutamic acid ligase activity"/>
    <property type="evidence" value="ECO:0000250"/>
    <property type="project" value="UniProtKB"/>
</dbReference>
<dbReference type="GO" id="GO:0030317">
    <property type="term" value="P:flagellated sperm motility"/>
    <property type="evidence" value="ECO:0000318"/>
    <property type="project" value="GO_Central"/>
</dbReference>
<dbReference type="GO" id="GO:0000226">
    <property type="term" value="P:microtubule cytoskeleton organization"/>
    <property type="evidence" value="ECO:0000318"/>
    <property type="project" value="GO_Central"/>
</dbReference>
<dbReference type="GO" id="GO:0036211">
    <property type="term" value="P:protein modification process"/>
    <property type="evidence" value="ECO:0007669"/>
    <property type="project" value="InterPro"/>
</dbReference>
<dbReference type="Gene3D" id="3.30.1490.20">
    <property type="entry name" value="ATP-grasp fold, A domain"/>
    <property type="match status" value="1"/>
</dbReference>
<dbReference type="Gene3D" id="3.30.470.20">
    <property type="entry name" value="ATP-grasp fold, B domain"/>
    <property type="match status" value="1"/>
</dbReference>
<dbReference type="InterPro" id="IPR013815">
    <property type="entry name" value="ATP_grasp_subdomain_1"/>
</dbReference>
<dbReference type="InterPro" id="IPR004344">
    <property type="entry name" value="TTL/TTLL_fam"/>
</dbReference>
<dbReference type="PANTHER" id="PTHR12241">
    <property type="entry name" value="TUBULIN POLYGLUTAMYLASE"/>
    <property type="match status" value="1"/>
</dbReference>
<dbReference type="PANTHER" id="PTHR12241:SF39">
    <property type="entry name" value="TUBULIN POLYGLUTAMYLASE TTLL9-RELATED"/>
    <property type="match status" value="1"/>
</dbReference>
<dbReference type="Pfam" id="PF03133">
    <property type="entry name" value="TTL"/>
    <property type="match status" value="1"/>
</dbReference>
<dbReference type="SUPFAM" id="SSF56059">
    <property type="entry name" value="Glutathione synthetase ATP-binding domain-like"/>
    <property type="match status" value="1"/>
</dbReference>
<dbReference type="PROSITE" id="PS51221">
    <property type="entry name" value="TTL"/>
    <property type="match status" value="1"/>
</dbReference>
<sequence>MSRPKNQNYKGHGLQKGKEREQRASIRFKTTLMNTLMDVLRHRPGWVEVKDEGEWDFYWCDVSWLRENFDHTYMGEHVRISHFRNHYELTRKNYMVKNLKRFRKQLEREAGKLEAAKCDFFPKTFEMPCEYHLFVEEFRKNPGITWIMKPVARSQGKGIFLFRRLKDIMDWKKGTAGKKLTSLEAQPARNTVNPSGSHDTRSSDDQKDEIPVENYVAQRYIENPYLIGGRKFDLRVYVLVMSYIPLRAWLYRDGFARFSNTRFTLNSIDDQYVHLTNVAVQKTSPDYHPKKGCKWMLQRFRQYLASKHGPEAVETLFSDMDNIFIRSLQSVQKVIISDKHCFELYGYDILIDQDLKPWLLEVNASPSLTASSQEDYELKTCLLEDTLHIVDMEARLTGREKRVGGFDLMWNDGPVSREEGGPDLSGMGNFVTNTHLGCVNDRKEQLRQLFRSLQGQKKTPN</sequence>
<reference key="1">
    <citation type="submission" date="2005-08" db="EMBL/GenBank/DDBJ databases">
        <authorList>
            <consortium name="NIH - Mammalian Gene Collection (MGC) project"/>
        </authorList>
    </citation>
    <scope>NUCLEOTIDE SEQUENCE [LARGE SCALE MRNA]</scope>
    <source>
        <strain>Crossbred X Angus</strain>
        <tissue>Liver</tissue>
    </source>
</reference>
<gene>
    <name type="primary">TTLL9</name>
</gene>
<feature type="chain" id="PRO_0000324516" description="Probable tubulin polyglutamylase TTLL9">
    <location>
        <begin position="1"/>
        <end position="461"/>
    </location>
</feature>
<feature type="domain" description="TTL" evidence="3">
    <location>
        <begin position="22"/>
        <end position="402"/>
    </location>
</feature>
<feature type="region of interest" description="Disordered" evidence="4">
    <location>
        <begin position="1"/>
        <end position="21"/>
    </location>
</feature>
<feature type="region of interest" description="Disordered" evidence="4">
    <location>
        <begin position="182"/>
        <end position="208"/>
    </location>
</feature>
<feature type="compositionally biased region" description="Polar residues" evidence="4">
    <location>
        <begin position="188"/>
        <end position="197"/>
    </location>
</feature>
<feature type="compositionally biased region" description="Basic and acidic residues" evidence="4">
    <location>
        <begin position="198"/>
        <end position="208"/>
    </location>
</feature>
<feature type="binding site" evidence="2">
    <location>
        <position position="149"/>
    </location>
    <ligand>
        <name>ATP</name>
        <dbReference type="ChEBI" id="CHEBI:30616"/>
    </ligand>
</feature>
<feature type="binding site" evidence="2">
    <location>
        <begin position="155"/>
        <end position="156"/>
    </location>
    <ligand>
        <name>ATP</name>
        <dbReference type="ChEBI" id="CHEBI:30616"/>
    </ligand>
</feature>
<feature type="binding site" evidence="2">
    <location>
        <position position="155"/>
    </location>
    <ligand>
        <name>a protein</name>
        <dbReference type="ChEBI" id="CHEBI:16541"/>
    </ligand>
    <ligandPart>
        <name>L-glutamate residue</name>
        <dbReference type="ChEBI" id="CHEBI:29973"/>
        <note>L-glutamate acceptor residue in protein target</note>
    </ligandPart>
</feature>
<feature type="binding site" evidence="2">
    <location>
        <begin position="218"/>
        <end position="221"/>
    </location>
    <ligand>
        <name>ATP</name>
        <dbReference type="ChEBI" id="CHEBI:30616"/>
    </ligand>
</feature>
<feature type="binding site" evidence="2">
    <location>
        <begin position="231"/>
        <end position="233"/>
    </location>
    <ligand>
        <name>ATP</name>
        <dbReference type="ChEBI" id="CHEBI:30616"/>
    </ligand>
</feature>
<feature type="binding site" evidence="2">
    <location>
        <position position="257"/>
    </location>
    <ligand>
        <name>L-glutamate</name>
        <dbReference type="ChEBI" id="CHEBI:29985"/>
    </ligand>
</feature>
<feature type="binding site" evidence="2">
    <location>
        <begin position="276"/>
        <end position="277"/>
    </location>
    <ligand>
        <name>ATP</name>
        <dbReference type="ChEBI" id="CHEBI:30616"/>
    </ligand>
</feature>
<feature type="binding site" evidence="2">
    <location>
        <position position="294"/>
    </location>
    <ligand>
        <name>L-glutamate</name>
        <dbReference type="ChEBI" id="CHEBI:29985"/>
    </ligand>
</feature>
<feature type="binding site" evidence="2">
    <location>
        <position position="348"/>
    </location>
    <ligand>
        <name>Mg(2+)</name>
        <dbReference type="ChEBI" id="CHEBI:18420"/>
        <label>1</label>
    </ligand>
</feature>
<feature type="binding site" evidence="2">
    <location>
        <position position="361"/>
    </location>
    <ligand>
        <name>Mg(2+)</name>
        <dbReference type="ChEBI" id="CHEBI:18420"/>
        <label>1</label>
    </ligand>
</feature>
<feature type="binding site" evidence="2">
    <location>
        <position position="361"/>
    </location>
    <ligand>
        <name>Mg(2+)</name>
        <dbReference type="ChEBI" id="CHEBI:18420"/>
        <label>2</label>
    </ligand>
</feature>
<feature type="binding site" evidence="2">
    <location>
        <position position="363"/>
    </location>
    <ligand>
        <name>Mg(2+)</name>
        <dbReference type="ChEBI" id="CHEBI:18420"/>
        <label>2</label>
    </ligand>
</feature>
<feature type="binding site" evidence="2">
    <location>
        <position position="379"/>
    </location>
    <ligand>
        <name>L-glutamate</name>
        <dbReference type="ChEBI" id="CHEBI:29985"/>
    </ligand>
</feature>
<feature type="site" description="Essential for specifying alpha-elongation versus initiation step of the polyglutamylase activity" evidence="2">
    <location>
        <position position="155"/>
    </location>
</feature>
<protein>
    <recommendedName>
        <fullName evidence="1">Probable tubulin polyglutamylase TTLL9</fullName>
        <ecNumber evidence="1">6.3.2.-</ecNumber>
    </recommendedName>
    <alternativeName>
        <fullName>Tubulin--tyrosine ligase-like protein 9</fullName>
    </alternativeName>
</protein>
<organism>
    <name type="scientific">Bos taurus</name>
    <name type="common">Bovine</name>
    <dbReference type="NCBI Taxonomy" id="9913"/>
    <lineage>
        <taxon>Eukaryota</taxon>
        <taxon>Metazoa</taxon>
        <taxon>Chordata</taxon>
        <taxon>Craniata</taxon>
        <taxon>Vertebrata</taxon>
        <taxon>Euteleostomi</taxon>
        <taxon>Mammalia</taxon>
        <taxon>Eutheria</taxon>
        <taxon>Laurasiatheria</taxon>
        <taxon>Artiodactyla</taxon>
        <taxon>Ruminantia</taxon>
        <taxon>Pecora</taxon>
        <taxon>Bovidae</taxon>
        <taxon>Bovinae</taxon>
        <taxon>Bos</taxon>
    </lineage>
</organism>
<accession>Q3SZH6</accession>
<proteinExistence type="evidence at transcript level"/>